<proteinExistence type="inferred from homology"/>
<reference key="1">
    <citation type="journal article" date="2008" name="J. Bacteriol.">
        <title>Genome sequence of the fish pathogen Renibacterium salmoninarum suggests reductive evolution away from an environmental Arthrobacter ancestor.</title>
        <authorList>
            <person name="Wiens G.D."/>
            <person name="Rockey D.D."/>
            <person name="Wu Z."/>
            <person name="Chang J."/>
            <person name="Levy R."/>
            <person name="Crane S."/>
            <person name="Chen D.S."/>
            <person name="Capri G.R."/>
            <person name="Burnett J.R."/>
            <person name="Sudheesh P.S."/>
            <person name="Schipma M.J."/>
            <person name="Burd H."/>
            <person name="Bhattacharyya A."/>
            <person name="Rhodes L.D."/>
            <person name="Kaul R."/>
            <person name="Strom M.S."/>
        </authorList>
    </citation>
    <scope>NUCLEOTIDE SEQUENCE [LARGE SCALE GENOMIC DNA]</scope>
    <source>
        <strain>ATCC 33209 / DSM 20767 / JCM 11484 / NBRC 15589 / NCIMB 2235</strain>
    </source>
</reference>
<organism>
    <name type="scientific">Renibacterium salmoninarum (strain ATCC 33209 / DSM 20767 / JCM 11484 / NBRC 15589 / NCIMB 2235)</name>
    <dbReference type="NCBI Taxonomy" id="288705"/>
    <lineage>
        <taxon>Bacteria</taxon>
        <taxon>Bacillati</taxon>
        <taxon>Actinomycetota</taxon>
        <taxon>Actinomycetes</taxon>
        <taxon>Micrococcales</taxon>
        <taxon>Micrococcaceae</taxon>
        <taxon>Renibacterium</taxon>
    </lineage>
</organism>
<evidence type="ECO:0000255" key="1">
    <source>
        <dbReference type="HAMAP-Rule" id="MF_00175"/>
    </source>
</evidence>
<evidence type="ECO:0000255" key="2">
    <source>
        <dbReference type="PROSITE-ProRule" id="PRU01250"/>
    </source>
</evidence>
<name>CLPX_RENSM</name>
<comment type="function">
    <text evidence="1">ATP-dependent specificity component of the Clp protease. It directs the protease to specific substrates. Can perform chaperone functions in the absence of ClpP.</text>
</comment>
<comment type="subunit">
    <text evidence="1">Component of the ClpX-ClpP complex. Forms a hexameric ring that, in the presence of ATP, binds to fourteen ClpP subunits assembled into a disk-like structure with a central cavity, resembling the structure of eukaryotic proteasomes.</text>
</comment>
<comment type="similarity">
    <text evidence="1">Belongs to the ClpX chaperone family.</text>
</comment>
<dbReference type="EMBL" id="CP000910">
    <property type="protein sequence ID" value="ABY24982.1"/>
    <property type="molecule type" value="Genomic_DNA"/>
</dbReference>
<dbReference type="RefSeq" id="WP_012246622.1">
    <property type="nucleotide sequence ID" value="NC_010168.1"/>
</dbReference>
<dbReference type="SMR" id="A9WUW1"/>
<dbReference type="STRING" id="288705.RSal33209_3266"/>
<dbReference type="KEGG" id="rsa:RSal33209_3266"/>
<dbReference type="eggNOG" id="COG1219">
    <property type="taxonomic scope" value="Bacteria"/>
</dbReference>
<dbReference type="HOGENOM" id="CLU_014218_8_2_11"/>
<dbReference type="Proteomes" id="UP000002007">
    <property type="component" value="Chromosome"/>
</dbReference>
<dbReference type="GO" id="GO:0009376">
    <property type="term" value="C:HslUV protease complex"/>
    <property type="evidence" value="ECO:0007669"/>
    <property type="project" value="TreeGrafter"/>
</dbReference>
<dbReference type="GO" id="GO:0005524">
    <property type="term" value="F:ATP binding"/>
    <property type="evidence" value="ECO:0007669"/>
    <property type="project" value="UniProtKB-UniRule"/>
</dbReference>
<dbReference type="GO" id="GO:0016887">
    <property type="term" value="F:ATP hydrolysis activity"/>
    <property type="evidence" value="ECO:0007669"/>
    <property type="project" value="InterPro"/>
</dbReference>
<dbReference type="GO" id="GO:0140662">
    <property type="term" value="F:ATP-dependent protein folding chaperone"/>
    <property type="evidence" value="ECO:0007669"/>
    <property type="project" value="InterPro"/>
</dbReference>
<dbReference type="GO" id="GO:0046983">
    <property type="term" value="F:protein dimerization activity"/>
    <property type="evidence" value="ECO:0007669"/>
    <property type="project" value="InterPro"/>
</dbReference>
<dbReference type="GO" id="GO:0051082">
    <property type="term" value="F:unfolded protein binding"/>
    <property type="evidence" value="ECO:0007669"/>
    <property type="project" value="UniProtKB-UniRule"/>
</dbReference>
<dbReference type="GO" id="GO:0008270">
    <property type="term" value="F:zinc ion binding"/>
    <property type="evidence" value="ECO:0007669"/>
    <property type="project" value="InterPro"/>
</dbReference>
<dbReference type="GO" id="GO:0051301">
    <property type="term" value="P:cell division"/>
    <property type="evidence" value="ECO:0007669"/>
    <property type="project" value="TreeGrafter"/>
</dbReference>
<dbReference type="GO" id="GO:0051603">
    <property type="term" value="P:proteolysis involved in protein catabolic process"/>
    <property type="evidence" value="ECO:0007669"/>
    <property type="project" value="TreeGrafter"/>
</dbReference>
<dbReference type="CDD" id="cd19497">
    <property type="entry name" value="RecA-like_ClpX"/>
    <property type="match status" value="1"/>
</dbReference>
<dbReference type="FunFam" id="1.10.8.60:FF:000002">
    <property type="entry name" value="ATP-dependent Clp protease ATP-binding subunit ClpX"/>
    <property type="match status" value="1"/>
</dbReference>
<dbReference type="FunFam" id="3.40.50.300:FF:000005">
    <property type="entry name" value="ATP-dependent Clp protease ATP-binding subunit ClpX"/>
    <property type="match status" value="1"/>
</dbReference>
<dbReference type="Gene3D" id="1.10.8.60">
    <property type="match status" value="1"/>
</dbReference>
<dbReference type="Gene3D" id="6.20.220.10">
    <property type="entry name" value="ClpX chaperone, C4-type zinc finger domain"/>
    <property type="match status" value="1"/>
</dbReference>
<dbReference type="Gene3D" id="3.40.50.300">
    <property type="entry name" value="P-loop containing nucleotide triphosphate hydrolases"/>
    <property type="match status" value="1"/>
</dbReference>
<dbReference type="HAMAP" id="MF_00175">
    <property type="entry name" value="ClpX"/>
    <property type="match status" value="1"/>
</dbReference>
<dbReference type="InterPro" id="IPR003593">
    <property type="entry name" value="AAA+_ATPase"/>
</dbReference>
<dbReference type="InterPro" id="IPR050052">
    <property type="entry name" value="ATP-dep_Clp_protease_ClpX"/>
</dbReference>
<dbReference type="InterPro" id="IPR003959">
    <property type="entry name" value="ATPase_AAA_core"/>
</dbReference>
<dbReference type="InterPro" id="IPR019489">
    <property type="entry name" value="Clp_ATPase_C"/>
</dbReference>
<dbReference type="InterPro" id="IPR004487">
    <property type="entry name" value="Clp_protease_ATP-bd_su_ClpX"/>
</dbReference>
<dbReference type="InterPro" id="IPR046425">
    <property type="entry name" value="ClpX_bact"/>
</dbReference>
<dbReference type="InterPro" id="IPR027417">
    <property type="entry name" value="P-loop_NTPase"/>
</dbReference>
<dbReference type="InterPro" id="IPR010603">
    <property type="entry name" value="Znf_CppX_C4"/>
</dbReference>
<dbReference type="InterPro" id="IPR038366">
    <property type="entry name" value="Znf_CppX_C4_sf"/>
</dbReference>
<dbReference type="NCBIfam" id="TIGR00382">
    <property type="entry name" value="clpX"/>
    <property type="match status" value="1"/>
</dbReference>
<dbReference type="NCBIfam" id="NF003745">
    <property type="entry name" value="PRK05342.1"/>
    <property type="match status" value="1"/>
</dbReference>
<dbReference type="PANTHER" id="PTHR48102:SF7">
    <property type="entry name" value="ATP-DEPENDENT CLP PROTEASE ATP-BINDING SUBUNIT CLPX-LIKE, MITOCHONDRIAL"/>
    <property type="match status" value="1"/>
</dbReference>
<dbReference type="PANTHER" id="PTHR48102">
    <property type="entry name" value="ATP-DEPENDENT CLP PROTEASE ATP-BINDING SUBUNIT CLPX-LIKE, MITOCHONDRIAL-RELATED"/>
    <property type="match status" value="1"/>
</dbReference>
<dbReference type="Pfam" id="PF07724">
    <property type="entry name" value="AAA_2"/>
    <property type="match status" value="1"/>
</dbReference>
<dbReference type="Pfam" id="PF10431">
    <property type="entry name" value="ClpB_D2-small"/>
    <property type="match status" value="1"/>
</dbReference>
<dbReference type="Pfam" id="PF06689">
    <property type="entry name" value="zf-C4_ClpX"/>
    <property type="match status" value="1"/>
</dbReference>
<dbReference type="SMART" id="SM00382">
    <property type="entry name" value="AAA"/>
    <property type="match status" value="1"/>
</dbReference>
<dbReference type="SMART" id="SM01086">
    <property type="entry name" value="ClpB_D2-small"/>
    <property type="match status" value="1"/>
</dbReference>
<dbReference type="SMART" id="SM00994">
    <property type="entry name" value="zf-C4_ClpX"/>
    <property type="match status" value="1"/>
</dbReference>
<dbReference type="SUPFAM" id="SSF57716">
    <property type="entry name" value="Glucocorticoid receptor-like (DNA-binding domain)"/>
    <property type="match status" value="1"/>
</dbReference>
<dbReference type="SUPFAM" id="SSF52540">
    <property type="entry name" value="P-loop containing nucleoside triphosphate hydrolases"/>
    <property type="match status" value="1"/>
</dbReference>
<dbReference type="PROSITE" id="PS51902">
    <property type="entry name" value="CLPX_ZB"/>
    <property type="match status" value="1"/>
</dbReference>
<protein>
    <recommendedName>
        <fullName evidence="1">ATP-dependent Clp protease ATP-binding subunit ClpX</fullName>
    </recommendedName>
</protein>
<sequence length="427" mass="46325">MARMGESTDLLKCSFCGKSQKQVRKLIAGPGVYICDECIELCNEIIEEELAEVADLGQFELPKPKEIFNFLQEYVIGQEPAKRSLSVAVYNHYKRIQAGSKGSALADGNHHDDVEIAKSNILLIGPTGCGKTYLAQTLARRLNVPFAVADATALTEAGYVGEDVENILLKLIQAADYDVKKAEQGIIYIDEIDKISRKSENPSITRDVSGEGVQQALLKILEGTVASVPPQGGRKHPHQEFIQIDTTNVLFIVAGAFAGLEEIIGARAGKKGIGFGAPLGALSGDELGYGDVMPEDLLKFGLIPEFIGRLPVITTVSHLDRPALMQILSEPKNALIKQYQKMFHLDGVDLVFEDDALEAIADQALERGTGARGLRAIMEEVLLPVMFELPSREDIASAVVTAEVVREGGQPTLIPHDVVAKRRNKSA</sequence>
<feature type="chain" id="PRO_1000077169" description="ATP-dependent Clp protease ATP-binding subunit ClpX">
    <location>
        <begin position="1"/>
        <end position="427"/>
    </location>
</feature>
<feature type="domain" description="ClpX-type ZB" evidence="2">
    <location>
        <begin position="1"/>
        <end position="54"/>
    </location>
</feature>
<feature type="binding site" evidence="2">
    <location>
        <position position="13"/>
    </location>
    <ligand>
        <name>Zn(2+)</name>
        <dbReference type="ChEBI" id="CHEBI:29105"/>
    </ligand>
</feature>
<feature type="binding site" evidence="2">
    <location>
        <position position="16"/>
    </location>
    <ligand>
        <name>Zn(2+)</name>
        <dbReference type="ChEBI" id="CHEBI:29105"/>
    </ligand>
</feature>
<feature type="binding site" evidence="2">
    <location>
        <position position="35"/>
    </location>
    <ligand>
        <name>Zn(2+)</name>
        <dbReference type="ChEBI" id="CHEBI:29105"/>
    </ligand>
</feature>
<feature type="binding site" evidence="2">
    <location>
        <position position="38"/>
    </location>
    <ligand>
        <name>Zn(2+)</name>
        <dbReference type="ChEBI" id="CHEBI:29105"/>
    </ligand>
</feature>
<feature type="binding site" evidence="1">
    <location>
        <begin position="126"/>
        <end position="133"/>
    </location>
    <ligand>
        <name>ATP</name>
        <dbReference type="ChEBI" id="CHEBI:30616"/>
    </ligand>
</feature>
<gene>
    <name evidence="1" type="primary">clpX</name>
    <name type="ordered locus">RSal33209_3266</name>
</gene>
<accession>A9WUW1</accession>
<keyword id="KW-0067">ATP-binding</keyword>
<keyword id="KW-0143">Chaperone</keyword>
<keyword id="KW-0479">Metal-binding</keyword>
<keyword id="KW-0547">Nucleotide-binding</keyword>
<keyword id="KW-1185">Reference proteome</keyword>
<keyword id="KW-0862">Zinc</keyword>